<feature type="chain" id="PRO_0000336531" description="CinA-like protein">
    <location>
        <begin position="1"/>
        <end position="423"/>
    </location>
</feature>
<organism>
    <name type="scientific">Synechococcus sp. (strain CC9311)</name>
    <dbReference type="NCBI Taxonomy" id="64471"/>
    <lineage>
        <taxon>Bacteria</taxon>
        <taxon>Bacillati</taxon>
        <taxon>Cyanobacteriota</taxon>
        <taxon>Cyanophyceae</taxon>
        <taxon>Synechococcales</taxon>
        <taxon>Synechococcaceae</taxon>
        <taxon>Synechococcus</taxon>
    </lineage>
</organism>
<protein>
    <recommendedName>
        <fullName evidence="1">CinA-like protein</fullName>
    </recommendedName>
</protein>
<dbReference type="EMBL" id="CP000435">
    <property type="protein sequence ID" value="ABI45609.1"/>
    <property type="molecule type" value="Genomic_DNA"/>
</dbReference>
<dbReference type="RefSeq" id="WP_011618281.1">
    <property type="nucleotide sequence ID" value="NC_008319.1"/>
</dbReference>
<dbReference type="SMR" id="Q0IDD6"/>
<dbReference type="STRING" id="64471.sync_0302"/>
<dbReference type="KEGG" id="syg:sync_0302"/>
<dbReference type="eggNOG" id="COG1058">
    <property type="taxonomic scope" value="Bacteria"/>
</dbReference>
<dbReference type="eggNOG" id="COG1546">
    <property type="taxonomic scope" value="Bacteria"/>
</dbReference>
<dbReference type="HOGENOM" id="CLU_030805_9_3_3"/>
<dbReference type="OrthoDB" id="9801454at2"/>
<dbReference type="Proteomes" id="UP000001961">
    <property type="component" value="Chromosome"/>
</dbReference>
<dbReference type="CDD" id="cd00885">
    <property type="entry name" value="cinA"/>
    <property type="match status" value="1"/>
</dbReference>
<dbReference type="Gene3D" id="3.30.70.2860">
    <property type="match status" value="1"/>
</dbReference>
<dbReference type="Gene3D" id="3.90.950.20">
    <property type="entry name" value="CinA-like"/>
    <property type="match status" value="1"/>
</dbReference>
<dbReference type="Gene3D" id="3.40.980.10">
    <property type="entry name" value="MoaB/Mog-like domain"/>
    <property type="match status" value="1"/>
</dbReference>
<dbReference type="HAMAP" id="MF_00226_B">
    <property type="entry name" value="CinA_B"/>
    <property type="match status" value="1"/>
</dbReference>
<dbReference type="InterPro" id="IPR050101">
    <property type="entry name" value="CinA"/>
</dbReference>
<dbReference type="InterPro" id="IPR036653">
    <property type="entry name" value="CinA-like_C"/>
</dbReference>
<dbReference type="InterPro" id="IPR008136">
    <property type="entry name" value="CinA_C"/>
</dbReference>
<dbReference type="InterPro" id="IPR041424">
    <property type="entry name" value="CinA_KH"/>
</dbReference>
<dbReference type="InterPro" id="IPR008135">
    <property type="entry name" value="Competence-induced_CinA"/>
</dbReference>
<dbReference type="InterPro" id="IPR036425">
    <property type="entry name" value="MoaB/Mog-like_dom_sf"/>
</dbReference>
<dbReference type="InterPro" id="IPR001453">
    <property type="entry name" value="MoaB/Mog_dom"/>
</dbReference>
<dbReference type="NCBIfam" id="TIGR00200">
    <property type="entry name" value="cinA_nterm"/>
    <property type="match status" value="1"/>
</dbReference>
<dbReference type="NCBIfam" id="TIGR00199">
    <property type="entry name" value="PncC_domain"/>
    <property type="match status" value="1"/>
</dbReference>
<dbReference type="NCBIfam" id="NF001813">
    <property type="entry name" value="PRK00549.1"/>
    <property type="match status" value="1"/>
</dbReference>
<dbReference type="PANTHER" id="PTHR13939">
    <property type="entry name" value="NICOTINAMIDE-NUCLEOTIDE AMIDOHYDROLASE PNCC"/>
    <property type="match status" value="1"/>
</dbReference>
<dbReference type="PANTHER" id="PTHR13939:SF0">
    <property type="entry name" value="NMN AMIDOHYDROLASE-LIKE PROTEIN YFAY"/>
    <property type="match status" value="1"/>
</dbReference>
<dbReference type="Pfam" id="PF02464">
    <property type="entry name" value="CinA"/>
    <property type="match status" value="1"/>
</dbReference>
<dbReference type="Pfam" id="PF18146">
    <property type="entry name" value="CinA_KH"/>
    <property type="match status" value="1"/>
</dbReference>
<dbReference type="Pfam" id="PF00994">
    <property type="entry name" value="MoCF_biosynth"/>
    <property type="match status" value="1"/>
</dbReference>
<dbReference type="PIRSF" id="PIRSF006728">
    <property type="entry name" value="CinA"/>
    <property type="match status" value="1"/>
</dbReference>
<dbReference type="SMART" id="SM00852">
    <property type="entry name" value="MoCF_biosynth"/>
    <property type="match status" value="1"/>
</dbReference>
<dbReference type="SUPFAM" id="SSF142433">
    <property type="entry name" value="CinA-like"/>
    <property type="match status" value="1"/>
</dbReference>
<dbReference type="SUPFAM" id="SSF53218">
    <property type="entry name" value="Molybdenum cofactor biosynthesis proteins"/>
    <property type="match status" value="1"/>
</dbReference>
<proteinExistence type="inferred from homology"/>
<comment type="similarity">
    <text evidence="1">Belongs to the CinA family.</text>
</comment>
<gene>
    <name type="ordered locus">sync_0302</name>
</gene>
<keyword id="KW-1185">Reference proteome</keyword>
<evidence type="ECO:0000255" key="1">
    <source>
        <dbReference type="HAMAP-Rule" id="MF_00226"/>
    </source>
</evidence>
<accession>Q0IDD6</accession>
<reference key="1">
    <citation type="journal article" date="2006" name="Proc. Natl. Acad. Sci. U.S.A.">
        <title>Genome sequence of Synechococcus CC9311: insights into adaptation to a coastal environment.</title>
        <authorList>
            <person name="Palenik B."/>
            <person name="Ren Q."/>
            <person name="Dupont C.L."/>
            <person name="Myers G.S."/>
            <person name="Heidelberg J.F."/>
            <person name="Badger J.H."/>
            <person name="Madupu R."/>
            <person name="Nelson W.C."/>
            <person name="Brinkac L.M."/>
            <person name="Dodson R.J."/>
            <person name="Durkin A.S."/>
            <person name="Daugherty S.C."/>
            <person name="Sullivan S.A."/>
            <person name="Khouri H."/>
            <person name="Mohamoud Y."/>
            <person name="Halpin R."/>
            <person name="Paulsen I.T."/>
        </authorList>
    </citation>
    <scope>NUCLEOTIDE SEQUENCE [LARGE SCALE GENOMIC DNA]</scope>
    <source>
        <strain>CC9311</strain>
    </source>
</reference>
<sequence length="423" mass="44974">MADRSERSGVEILCVGTELLLGNILNGNARWLSEELATLGLPHFRQTVVGDNRDRLIALVQEIAQRSRVLIVTGGLGPTPDDLTTEAIAAAFSVPLEERVDVWSDIQEKARSRGRTPSPETRRQALLPVGAEVLWNPTGTAPGMIWTPVPGFSVLTFPGVPSEMKAMWKATAVPWFRSSGLSKGVFVSRLLHFWGIGESTLAEQVADLLEGVNPTVAPYAGRGEVKLRITACADVSSKAWVLVDQIEQELRQRTGNLCFGVDEDSLASVVLKRLGQTGQTLSVAESCTGGGLGAELTAVPGASSVMLGGVISYSNAVKRDLLSVPEDLLTQHGAVSAQVAEAMALGVRRLTGSDWALSITGIAGPDGGTPEKPVGLVFVGVAGPDGCSTEMLRLGPTRGREWIRIVSAGEVLNRLRLRLMVND</sequence>
<name>CINAL_SYNS3</name>